<comment type="similarity">
    <text evidence="1">Belongs to the UPF0178 family.</text>
</comment>
<accession>B1YQC8</accession>
<dbReference type="EMBL" id="CP001025">
    <property type="protein sequence ID" value="ACB64066.1"/>
    <property type="molecule type" value="Genomic_DNA"/>
</dbReference>
<dbReference type="RefSeq" id="WP_011656847.1">
    <property type="nucleotide sequence ID" value="NC_010551.1"/>
</dbReference>
<dbReference type="KEGG" id="bac:BamMC406_1579"/>
<dbReference type="HOGENOM" id="CLU_106619_2_1_4"/>
<dbReference type="OrthoDB" id="9798918at2"/>
<dbReference type="Proteomes" id="UP000001680">
    <property type="component" value="Chromosome 1"/>
</dbReference>
<dbReference type="CDD" id="cd18720">
    <property type="entry name" value="PIN_YqxD-like"/>
    <property type="match status" value="1"/>
</dbReference>
<dbReference type="HAMAP" id="MF_00489">
    <property type="entry name" value="UPF0178"/>
    <property type="match status" value="1"/>
</dbReference>
<dbReference type="InterPro" id="IPR003791">
    <property type="entry name" value="UPF0178"/>
</dbReference>
<dbReference type="NCBIfam" id="NF001095">
    <property type="entry name" value="PRK00124.1"/>
    <property type="match status" value="1"/>
</dbReference>
<dbReference type="PANTHER" id="PTHR35146">
    <property type="entry name" value="UPF0178 PROTEIN YAII"/>
    <property type="match status" value="1"/>
</dbReference>
<dbReference type="PANTHER" id="PTHR35146:SF1">
    <property type="entry name" value="UPF0178 PROTEIN YAII"/>
    <property type="match status" value="1"/>
</dbReference>
<dbReference type="Pfam" id="PF02639">
    <property type="entry name" value="DUF188"/>
    <property type="match status" value="1"/>
</dbReference>
<feature type="chain" id="PRO_1000126179" description="UPF0178 protein BamMC406_1579">
    <location>
        <begin position="1"/>
        <end position="150"/>
    </location>
</feature>
<name>Y1579_BURA4</name>
<organism>
    <name type="scientific">Burkholderia ambifaria (strain MC40-6)</name>
    <dbReference type="NCBI Taxonomy" id="398577"/>
    <lineage>
        <taxon>Bacteria</taxon>
        <taxon>Pseudomonadati</taxon>
        <taxon>Pseudomonadota</taxon>
        <taxon>Betaproteobacteria</taxon>
        <taxon>Burkholderiales</taxon>
        <taxon>Burkholderiaceae</taxon>
        <taxon>Burkholderia</taxon>
        <taxon>Burkholderia cepacia complex</taxon>
    </lineage>
</organism>
<evidence type="ECO:0000255" key="1">
    <source>
        <dbReference type="HAMAP-Rule" id="MF_00489"/>
    </source>
</evidence>
<protein>
    <recommendedName>
        <fullName evidence="1">UPF0178 protein BamMC406_1579</fullName>
    </recommendedName>
</protein>
<sequence length="150" mass="16157">MQVLVDADACPAVIKDMLFRAARRAEICVTLVANQFLRTPPSPFIKSVQVPAGFDVADARIVELAQAGDLVITADIPLAAAVLDKGAHALDPRGNWFSRENIEERLSTRAMMDQLRSSGVDTGGPAPFSARDGKAFASQLDRFLARHGKP</sequence>
<proteinExistence type="inferred from homology"/>
<gene>
    <name type="ordered locus">BamMC406_1579</name>
</gene>
<reference key="1">
    <citation type="submission" date="2008-04" db="EMBL/GenBank/DDBJ databases">
        <title>Complete sequence of chromosome 1 of Burkholderia ambifaria MC40-6.</title>
        <authorList>
            <person name="Copeland A."/>
            <person name="Lucas S."/>
            <person name="Lapidus A."/>
            <person name="Glavina del Rio T."/>
            <person name="Dalin E."/>
            <person name="Tice H."/>
            <person name="Pitluck S."/>
            <person name="Chain P."/>
            <person name="Malfatti S."/>
            <person name="Shin M."/>
            <person name="Vergez L."/>
            <person name="Lang D."/>
            <person name="Schmutz J."/>
            <person name="Larimer F."/>
            <person name="Land M."/>
            <person name="Hauser L."/>
            <person name="Kyrpides N."/>
            <person name="Lykidis A."/>
            <person name="Ramette A."/>
            <person name="Konstantinidis K."/>
            <person name="Tiedje J."/>
            <person name="Richardson P."/>
        </authorList>
    </citation>
    <scope>NUCLEOTIDE SEQUENCE [LARGE SCALE GENOMIC DNA]</scope>
    <source>
        <strain>MC40-6</strain>
    </source>
</reference>